<reference key="1">
    <citation type="journal article" date="2007" name="Microbiology">
        <title>Comparative analysis of the Corynebacterium glutamicum group and complete genome sequence of strain R.</title>
        <authorList>
            <person name="Yukawa H."/>
            <person name="Omumasaba C.A."/>
            <person name="Nonaka H."/>
            <person name="Kos P."/>
            <person name="Okai N."/>
            <person name="Suzuki N."/>
            <person name="Suda M."/>
            <person name="Tsuge Y."/>
            <person name="Watanabe J."/>
            <person name="Ikeda Y."/>
            <person name="Vertes A.A."/>
            <person name="Inui M."/>
        </authorList>
    </citation>
    <scope>NUCLEOTIDE SEQUENCE [LARGE SCALE GENOMIC DNA]</scope>
    <source>
        <strain>R</strain>
    </source>
</reference>
<name>RL7_CORGB</name>
<organism>
    <name type="scientific">Corynebacterium glutamicum (strain R)</name>
    <dbReference type="NCBI Taxonomy" id="340322"/>
    <lineage>
        <taxon>Bacteria</taxon>
        <taxon>Bacillati</taxon>
        <taxon>Actinomycetota</taxon>
        <taxon>Actinomycetes</taxon>
        <taxon>Mycobacteriales</taxon>
        <taxon>Corynebacteriaceae</taxon>
        <taxon>Corynebacterium</taxon>
    </lineage>
</organism>
<protein>
    <recommendedName>
        <fullName evidence="1">Large ribosomal subunit protein bL12</fullName>
    </recommendedName>
    <alternativeName>
        <fullName evidence="2">50S ribosomal protein L7/L12</fullName>
    </alternativeName>
</protein>
<comment type="function">
    <text evidence="1">Forms part of the ribosomal stalk which helps the ribosome interact with GTP-bound translation factors. Is thus essential for accurate translation.</text>
</comment>
<comment type="subunit">
    <text evidence="1">Homodimer. Part of the ribosomal stalk of the 50S ribosomal subunit. Forms a multimeric L10(L12)X complex, where L10 forms an elongated spine to which 2 to 4 L12 dimers bind in a sequential fashion. Binds GTP-bound translation factors.</text>
</comment>
<comment type="similarity">
    <text evidence="1">Belongs to the bacterial ribosomal protein bL12 family.</text>
</comment>
<feature type="chain" id="PRO_1000006995" description="Large ribosomal subunit protein bL12">
    <location>
        <begin position="1"/>
        <end position="128"/>
    </location>
</feature>
<evidence type="ECO:0000255" key="1">
    <source>
        <dbReference type="HAMAP-Rule" id="MF_00368"/>
    </source>
</evidence>
<evidence type="ECO:0000305" key="2"/>
<keyword id="KW-0687">Ribonucleoprotein</keyword>
<keyword id="KW-0689">Ribosomal protein</keyword>
<gene>
    <name evidence="1" type="primary">rplL</name>
    <name type="ordered locus">cgR_0589</name>
</gene>
<accession>A4QBG0</accession>
<dbReference type="EMBL" id="AP009044">
    <property type="protein sequence ID" value="BAF53557.1"/>
    <property type="molecule type" value="Genomic_DNA"/>
</dbReference>
<dbReference type="RefSeq" id="WP_003854210.1">
    <property type="nucleotide sequence ID" value="NC_009342.1"/>
</dbReference>
<dbReference type="SMR" id="A4QBG0"/>
<dbReference type="GeneID" id="1021491"/>
<dbReference type="KEGG" id="cgt:cgR_0589"/>
<dbReference type="HOGENOM" id="CLU_086499_3_0_11"/>
<dbReference type="PhylomeDB" id="A4QBG0"/>
<dbReference type="Proteomes" id="UP000006698">
    <property type="component" value="Chromosome"/>
</dbReference>
<dbReference type="GO" id="GO:0022625">
    <property type="term" value="C:cytosolic large ribosomal subunit"/>
    <property type="evidence" value="ECO:0007669"/>
    <property type="project" value="TreeGrafter"/>
</dbReference>
<dbReference type="GO" id="GO:0003729">
    <property type="term" value="F:mRNA binding"/>
    <property type="evidence" value="ECO:0007669"/>
    <property type="project" value="TreeGrafter"/>
</dbReference>
<dbReference type="GO" id="GO:0003735">
    <property type="term" value="F:structural constituent of ribosome"/>
    <property type="evidence" value="ECO:0007669"/>
    <property type="project" value="InterPro"/>
</dbReference>
<dbReference type="GO" id="GO:0006412">
    <property type="term" value="P:translation"/>
    <property type="evidence" value="ECO:0007669"/>
    <property type="project" value="UniProtKB-UniRule"/>
</dbReference>
<dbReference type="CDD" id="cd00387">
    <property type="entry name" value="Ribosomal_L7_L12"/>
    <property type="match status" value="1"/>
</dbReference>
<dbReference type="FunFam" id="1.20.5.710:FF:000005">
    <property type="entry name" value="50S ribosomal protein L7/L12"/>
    <property type="match status" value="1"/>
</dbReference>
<dbReference type="FunFam" id="3.30.1390.10:FF:000001">
    <property type="entry name" value="50S ribosomal protein L7/L12"/>
    <property type="match status" value="1"/>
</dbReference>
<dbReference type="Gene3D" id="3.30.1390.10">
    <property type="match status" value="1"/>
</dbReference>
<dbReference type="Gene3D" id="1.20.5.710">
    <property type="entry name" value="Single helix bin"/>
    <property type="match status" value="1"/>
</dbReference>
<dbReference type="HAMAP" id="MF_00368">
    <property type="entry name" value="Ribosomal_bL12"/>
    <property type="match status" value="1"/>
</dbReference>
<dbReference type="InterPro" id="IPR000206">
    <property type="entry name" value="Ribosomal_bL12"/>
</dbReference>
<dbReference type="InterPro" id="IPR013823">
    <property type="entry name" value="Ribosomal_bL12_C"/>
</dbReference>
<dbReference type="InterPro" id="IPR014719">
    <property type="entry name" value="Ribosomal_bL12_C/ClpS-like"/>
</dbReference>
<dbReference type="InterPro" id="IPR008932">
    <property type="entry name" value="Ribosomal_bL12_oligo"/>
</dbReference>
<dbReference type="InterPro" id="IPR036235">
    <property type="entry name" value="Ribosomal_bL12_oligo_N_sf"/>
</dbReference>
<dbReference type="NCBIfam" id="TIGR00855">
    <property type="entry name" value="L12"/>
    <property type="match status" value="1"/>
</dbReference>
<dbReference type="PANTHER" id="PTHR45987">
    <property type="entry name" value="39S RIBOSOMAL PROTEIN L12"/>
    <property type="match status" value="1"/>
</dbReference>
<dbReference type="PANTHER" id="PTHR45987:SF4">
    <property type="entry name" value="LARGE RIBOSOMAL SUBUNIT PROTEIN BL12M"/>
    <property type="match status" value="1"/>
</dbReference>
<dbReference type="Pfam" id="PF00542">
    <property type="entry name" value="Ribosomal_L12"/>
    <property type="match status" value="1"/>
</dbReference>
<dbReference type="Pfam" id="PF16320">
    <property type="entry name" value="Ribosomal_L12_N"/>
    <property type="match status" value="1"/>
</dbReference>
<dbReference type="SUPFAM" id="SSF54736">
    <property type="entry name" value="ClpS-like"/>
    <property type="match status" value="1"/>
</dbReference>
<dbReference type="SUPFAM" id="SSF48300">
    <property type="entry name" value="Ribosomal protein L7/12, oligomerisation (N-terminal) domain"/>
    <property type="match status" value="1"/>
</dbReference>
<proteinExistence type="inferred from homology"/>
<sequence>MAKLTKDELIEAFKEMTLIELSEFVKEFEEVFDVTAAAPVAVAAAGAAGGEAAAAEEKDEFDVVLEDAGAKKIGVIKAVRELVSGLGLKEAKELVEGAPKAILEGANKDDAEAAKAKLEEAGAKVTLK</sequence>